<gene>
    <name evidence="1" type="primary">dinB</name>
    <name type="ordered locus">Ecok1_02380</name>
    <name type="ORF">APECO1_1738</name>
</gene>
<reference key="1">
    <citation type="journal article" date="2007" name="J. Bacteriol.">
        <title>The genome sequence of avian pathogenic Escherichia coli strain O1:K1:H7 shares strong similarities with human extraintestinal pathogenic E. coli genomes.</title>
        <authorList>
            <person name="Johnson T.J."/>
            <person name="Kariyawasam S."/>
            <person name="Wannemuehler Y."/>
            <person name="Mangiamele P."/>
            <person name="Johnson S.J."/>
            <person name="Doetkott C."/>
            <person name="Skyberg J.A."/>
            <person name="Lynne A.M."/>
            <person name="Johnson J.R."/>
            <person name="Nolan L.K."/>
        </authorList>
    </citation>
    <scope>NUCLEOTIDE SEQUENCE [LARGE SCALE GENOMIC DNA]</scope>
</reference>
<dbReference type="EC" id="2.7.7.7" evidence="1"/>
<dbReference type="EMBL" id="CP000468">
    <property type="protein sequence ID" value="ABI99731.1"/>
    <property type="molecule type" value="Genomic_DNA"/>
</dbReference>
<dbReference type="RefSeq" id="WP_001226168.1">
    <property type="nucleotide sequence ID" value="NZ_CADILS010000061.1"/>
</dbReference>
<dbReference type="SMR" id="A1A7U2"/>
<dbReference type="KEGG" id="ecv:APECO1_1738"/>
<dbReference type="HOGENOM" id="CLU_012348_1_2_6"/>
<dbReference type="Proteomes" id="UP000008216">
    <property type="component" value="Chromosome"/>
</dbReference>
<dbReference type="GO" id="GO:0005829">
    <property type="term" value="C:cytosol"/>
    <property type="evidence" value="ECO:0007669"/>
    <property type="project" value="TreeGrafter"/>
</dbReference>
<dbReference type="GO" id="GO:0003684">
    <property type="term" value="F:damaged DNA binding"/>
    <property type="evidence" value="ECO:0007669"/>
    <property type="project" value="InterPro"/>
</dbReference>
<dbReference type="GO" id="GO:0003887">
    <property type="term" value="F:DNA-directed DNA polymerase activity"/>
    <property type="evidence" value="ECO:0007669"/>
    <property type="project" value="UniProtKB-UniRule"/>
</dbReference>
<dbReference type="GO" id="GO:0000287">
    <property type="term" value="F:magnesium ion binding"/>
    <property type="evidence" value="ECO:0007669"/>
    <property type="project" value="UniProtKB-UniRule"/>
</dbReference>
<dbReference type="GO" id="GO:0006261">
    <property type="term" value="P:DNA-templated DNA replication"/>
    <property type="evidence" value="ECO:0007669"/>
    <property type="project" value="UniProtKB-UniRule"/>
</dbReference>
<dbReference type="GO" id="GO:0042276">
    <property type="term" value="P:error-prone translesion synthesis"/>
    <property type="evidence" value="ECO:0007669"/>
    <property type="project" value="TreeGrafter"/>
</dbReference>
<dbReference type="GO" id="GO:0009432">
    <property type="term" value="P:SOS response"/>
    <property type="evidence" value="ECO:0007669"/>
    <property type="project" value="TreeGrafter"/>
</dbReference>
<dbReference type="CDD" id="cd03586">
    <property type="entry name" value="PolY_Pol_IV_kappa"/>
    <property type="match status" value="1"/>
</dbReference>
<dbReference type="FunFam" id="1.10.150.20:FF:000019">
    <property type="entry name" value="DNA polymerase IV"/>
    <property type="match status" value="1"/>
</dbReference>
<dbReference type="FunFam" id="3.30.1490.100:FF:000002">
    <property type="entry name" value="DNA polymerase IV"/>
    <property type="match status" value="1"/>
</dbReference>
<dbReference type="FunFam" id="3.30.70.270:FF:000002">
    <property type="entry name" value="DNA polymerase IV"/>
    <property type="match status" value="1"/>
</dbReference>
<dbReference type="FunFam" id="3.40.1170.60:FF:000001">
    <property type="entry name" value="DNA polymerase IV"/>
    <property type="match status" value="1"/>
</dbReference>
<dbReference type="Gene3D" id="3.30.70.270">
    <property type="match status" value="1"/>
</dbReference>
<dbReference type="Gene3D" id="3.40.1170.60">
    <property type="match status" value="1"/>
</dbReference>
<dbReference type="Gene3D" id="1.10.150.20">
    <property type="entry name" value="5' to 3' exonuclease, C-terminal subdomain"/>
    <property type="match status" value="1"/>
</dbReference>
<dbReference type="Gene3D" id="3.30.1490.100">
    <property type="entry name" value="DNA polymerase, Y-family, little finger domain"/>
    <property type="match status" value="1"/>
</dbReference>
<dbReference type="HAMAP" id="MF_01113">
    <property type="entry name" value="DNApol_IV"/>
    <property type="match status" value="1"/>
</dbReference>
<dbReference type="InterPro" id="IPR043502">
    <property type="entry name" value="DNA/RNA_pol_sf"/>
</dbReference>
<dbReference type="InterPro" id="IPR036775">
    <property type="entry name" value="DNA_pol_Y-fam_lit_finger_sf"/>
</dbReference>
<dbReference type="InterPro" id="IPR017961">
    <property type="entry name" value="DNA_pol_Y-fam_little_finger"/>
</dbReference>
<dbReference type="InterPro" id="IPR050116">
    <property type="entry name" value="DNA_polymerase-Y"/>
</dbReference>
<dbReference type="InterPro" id="IPR022880">
    <property type="entry name" value="DNApol_IV"/>
</dbReference>
<dbReference type="InterPro" id="IPR053848">
    <property type="entry name" value="IMS_HHH_1"/>
</dbReference>
<dbReference type="InterPro" id="IPR043128">
    <property type="entry name" value="Rev_trsase/Diguanyl_cyclase"/>
</dbReference>
<dbReference type="InterPro" id="IPR001126">
    <property type="entry name" value="UmuC"/>
</dbReference>
<dbReference type="NCBIfam" id="NF002677">
    <property type="entry name" value="PRK02406.1"/>
    <property type="match status" value="1"/>
</dbReference>
<dbReference type="PANTHER" id="PTHR11076:SF33">
    <property type="entry name" value="DNA POLYMERASE KAPPA"/>
    <property type="match status" value="1"/>
</dbReference>
<dbReference type="PANTHER" id="PTHR11076">
    <property type="entry name" value="DNA REPAIR POLYMERASE UMUC / TRANSFERASE FAMILY MEMBER"/>
    <property type="match status" value="1"/>
</dbReference>
<dbReference type="Pfam" id="PF00817">
    <property type="entry name" value="IMS"/>
    <property type="match status" value="1"/>
</dbReference>
<dbReference type="Pfam" id="PF11799">
    <property type="entry name" value="IMS_C"/>
    <property type="match status" value="1"/>
</dbReference>
<dbReference type="Pfam" id="PF21999">
    <property type="entry name" value="IMS_HHH_1"/>
    <property type="match status" value="1"/>
</dbReference>
<dbReference type="SUPFAM" id="SSF56672">
    <property type="entry name" value="DNA/RNA polymerases"/>
    <property type="match status" value="1"/>
</dbReference>
<dbReference type="SUPFAM" id="SSF100879">
    <property type="entry name" value="Lesion bypass DNA polymerase (Y-family), little finger domain"/>
    <property type="match status" value="1"/>
</dbReference>
<dbReference type="PROSITE" id="PS50173">
    <property type="entry name" value="UMUC"/>
    <property type="match status" value="1"/>
</dbReference>
<name>DPO4_ECOK1</name>
<accession>A1A7U2</accession>
<proteinExistence type="inferred from homology"/>
<feature type="chain" id="PRO_1000084890" description="DNA polymerase IV">
    <location>
        <begin position="1"/>
        <end position="351"/>
    </location>
</feature>
<feature type="domain" description="UmuC" evidence="1">
    <location>
        <begin position="4"/>
        <end position="185"/>
    </location>
</feature>
<feature type="active site" evidence="1">
    <location>
        <position position="104"/>
    </location>
</feature>
<feature type="binding site" evidence="1">
    <location>
        <position position="8"/>
    </location>
    <ligand>
        <name>Mg(2+)</name>
        <dbReference type="ChEBI" id="CHEBI:18420"/>
    </ligand>
</feature>
<feature type="binding site" evidence="1">
    <location>
        <position position="103"/>
    </location>
    <ligand>
        <name>Mg(2+)</name>
        <dbReference type="ChEBI" id="CHEBI:18420"/>
    </ligand>
</feature>
<feature type="site" description="Substrate discrimination" evidence="1">
    <location>
        <position position="13"/>
    </location>
</feature>
<comment type="function">
    <text evidence="1">Poorly processive, error-prone DNA polymerase involved in untargeted mutagenesis. Copies undamaged DNA at stalled replication forks, which arise in vivo from mismatched or misaligned primer ends. These misaligned primers can be extended by PolIV. Exhibits no 3'-5' exonuclease (proofreading) activity. May be involved in translesional synthesis, in conjunction with the beta clamp from PolIII.</text>
</comment>
<comment type="catalytic activity">
    <reaction evidence="1">
        <text>DNA(n) + a 2'-deoxyribonucleoside 5'-triphosphate = DNA(n+1) + diphosphate</text>
        <dbReference type="Rhea" id="RHEA:22508"/>
        <dbReference type="Rhea" id="RHEA-COMP:17339"/>
        <dbReference type="Rhea" id="RHEA-COMP:17340"/>
        <dbReference type="ChEBI" id="CHEBI:33019"/>
        <dbReference type="ChEBI" id="CHEBI:61560"/>
        <dbReference type="ChEBI" id="CHEBI:173112"/>
        <dbReference type="EC" id="2.7.7.7"/>
    </reaction>
</comment>
<comment type="cofactor">
    <cofactor evidence="1">
        <name>Mg(2+)</name>
        <dbReference type="ChEBI" id="CHEBI:18420"/>
    </cofactor>
    <text evidence="1">Binds 2 magnesium ions per subunit.</text>
</comment>
<comment type="subunit">
    <text evidence="1">Monomer.</text>
</comment>
<comment type="subcellular location">
    <subcellularLocation>
        <location evidence="1">Cytoplasm</location>
    </subcellularLocation>
</comment>
<comment type="similarity">
    <text evidence="1">Belongs to the DNA polymerase type-Y family.</text>
</comment>
<keyword id="KW-0963">Cytoplasm</keyword>
<keyword id="KW-0227">DNA damage</keyword>
<keyword id="KW-0234">DNA repair</keyword>
<keyword id="KW-0235">DNA replication</keyword>
<keyword id="KW-0238">DNA-binding</keyword>
<keyword id="KW-0239">DNA-directed DNA polymerase</keyword>
<keyword id="KW-0460">Magnesium</keyword>
<keyword id="KW-0479">Metal-binding</keyword>
<keyword id="KW-0515">Mutator protein</keyword>
<keyword id="KW-0548">Nucleotidyltransferase</keyword>
<keyword id="KW-1185">Reference proteome</keyword>
<keyword id="KW-0808">Transferase</keyword>
<organism>
    <name type="scientific">Escherichia coli O1:K1 / APEC</name>
    <dbReference type="NCBI Taxonomy" id="405955"/>
    <lineage>
        <taxon>Bacteria</taxon>
        <taxon>Pseudomonadati</taxon>
        <taxon>Pseudomonadota</taxon>
        <taxon>Gammaproteobacteria</taxon>
        <taxon>Enterobacterales</taxon>
        <taxon>Enterobacteriaceae</taxon>
        <taxon>Escherichia</taxon>
    </lineage>
</organism>
<sequence>MRKIIHVDMDCFFAAVEMRDNPALRDIPIAIGGSRERRGVISTANYPARKFGVRSAMPTGMALKLCPHLTLLPGRFDAYKEASNHIREIFSRYTSRIEPLSLDEAYLDVTDSVHCHGSATLIAQEIRQTIFNELQLTASAGVAPVKFLAKIASDMNKPNGQFVITPAEVPAFLQTLPLAKIPGVGKVSAAKLEAMGLRTCGDVQKCDLVTLLKRFGKFGRILWERSQGIDERDVNSERLRKSVGVERTMAEDIHHWSECEAIIERLYPELERRLAKVKPDLLIARQGVKLKFDDFQQTTQEHVWPRLNKSDLIATARKTWDERRGGRGVRLVGLHVTLLDPQMERQLVLGL</sequence>
<evidence type="ECO:0000255" key="1">
    <source>
        <dbReference type="HAMAP-Rule" id="MF_01113"/>
    </source>
</evidence>
<protein>
    <recommendedName>
        <fullName evidence="1">DNA polymerase IV</fullName>
        <shortName evidence="1">Pol IV</shortName>
        <ecNumber evidence="1">2.7.7.7</ecNumber>
    </recommendedName>
</protein>